<feature type="chain" id="PRO_0000147326" description="GTP cyclohydrolase 1 type 2 homolog">
    <location>
        <begin position="1"/>
        <end position="247"/>
    </location>
</feature>
<feature type="binding site" evidence="1">
    <location>
        <position position="63"/>
    </location>
    <ligand>
        <name>a divalent metal cation</name>
        <dbReference type="ChEBI" id="CHEBI:60240"/>
        <label>1</label>
    </ligand>
</feature>
<feature type="binding site" evidence="1">
    <location>
        <position position="64"/>
    </location>
    <ligand>
        <name>a divalent metal cation</name>
        <dbReference type="ChEBI" id="CHEBI:60240"/>
        <label>2</label>
    </ligand>
</feature>
<feature type="binding site" evidence="1">
    <location>
        <position position="101"/>
    </location>
    <ligand>
        <name>a divalent metal cation</name>
        <dbReference type="ChEBI" id="CHEBI:60240"/>
        <label>1</label>
    </ligand>
</feature>
<feature type="binding site" evidence="1">
    <location>
        <position position="215"/>
    </location>
    <ligand>
        <name>a divalent metal cation</name>
        <dbReference type="ChEBI" id="CHEBI:60240"/>
        <label>2</label>
    </ligand>
</feature>
<feature type="binding site" evidence="1">
    <location>
        <position position="219"/>
    </location>
    <ligand>
        <name>a divalent metal cation</name>
        <dbReference type="ChEBI" id="CHEBI:60240"/>
        <label>1</label>
    </ligand>
</feature>
<feature type="binding site" evidence="1">
    <location>
        <position position="219"/>
    </location>
    <ligand>
        <name>a divalent metal cation</name>
        <dbReference type="ChEBI" id="CHEBI:60240"/>
        <label>2</label>
    </ligand>
</feature>
<protein>
    <recommendedName>
        <fullName>GTP cyclohydrolase 1 type 2 homolog</fullName>
    </recommendedName>
</protein>
<organism>
    <name type="scientific">Salmonella typhi</name>
    <dbReference type="NCBI Taxonomy" id="90370"/>
    <lineage>
        <taxon>Bacteria</taxon>
        <taxon>Pseudomonadati</taxon>
        <taxon>Pseudomonadota</taxon>
        <taxon>Gammaproteobacteria</taxon>
        <taxon>Enterobacterales</taxon>
        <taxon>Enterobacteriaceae</taxon>
        <taxon>Salmonella</taxon>
    </lineage>
</organism>
<keyword id="KW-0227">DNA damage</keyword>
<keyword id="KW-0234">DNA repair</keyword>
<keyword id="KW-0479">Metal-binding</keyword>
<proteinExistence type="inferred from homology"/>
<sequence length="247" mass="26946">MKNTELEQLINDKLNSAAISDYAPNGLQVEGKETVQKIVTGVTASQALLDEAVRLQADAVIVHHGYFWKGESPVIRGMKRRRLKTLLANDINLYGWHLPLDAHPELGNNAQLAALLGITVKGEIEPLVPWGELSMPVPGLELASWIEARLGRKPLWCGDTGPENVQRVAWCTGGGQSFIDSAARFGVDAFITGEVSEQTIHSAREQGLHFYAAGHHATERGGIRALSEWLNENTALDVTFIDIPNPA</sequence>
<reference key="1">
    <citation type="journal article" date="2001" name="Nature">
        <title>Complete genome sequence of a multiple drug resistant Salmonella enterica serovar Typhi CT18.</title>
        <authorList>
            <person name="Parkhill J."/>
            <person name="Dougan G."/>
            <person name="James K.D."/>
            <person name="Thomson N.R."/>
            <person name="Pickard D."/>
            <person name="Wain J."/>
            <person name="Churcher C.M."/>
            <person name="Mungall K.L."/>
            <person name="Bentley S.D."/>
            <person name="Holden M.T.G."/>
            <person name="Sebaihia M."/>
            <person name="Baker S."/>
            <person name="Basham D."/>
            <person name="Brooks K."/>
            <person name="Chillingworth T."/>
            <person name="Connerton P."/>
            <person name="Cronin A."/>
            <person name="Davis P."/>
            <person name="Davies R.M."/>
            <person name="Dowd L."/>
            <person name="White N."/>
            <person name="Farrar J."/>
            <person name="Feltwell T."/>
            <person name="Hamlin N."/>
            <person name="Haque A."/>
            <person name="Hien T.T."/>
            <person name="Holroyd S."/>
            <person name="Jagels K."/>
            <person name="Krogh A."/>
            <person name="Larsen T.S."/>
            <person name="Leather S."/>
            <person name="Moule S."/>
            <person name="O'Gaora P."/>
            <person name="Parry C."/>
            <person name="Quail M.A."/>
            <person name="Rutherford K.M."/>
            <person name="Simmonds M."/>
            <person name="Skelton J."/>
            <person name="Stevens K."/>
            <person name="Whitehead S."/>
            <person name="Barrell B.G."/>
        </authorList>
    </citation>
    <scope>NUCLEOTIDE SEQUENCE [LARGE SCALE GENOMIC DNA]</scope>
    <source>
        <strain>CT18</strain>
    </source>
</reference>
<reference key="2">
    <citation type="journal article" date="2003" name="J. Bacteriol.">
        <title>Comparative genomics of Salmonella enterica serovar Typhi strains Ty2 and CT18.</title>
        <authorList>
            <person name="Deng W."/>
            <person name="Liou S.-R."/>
            <person name="Plunkett G. III"/>
            <person name="Mayhew G.F."/>
            <person name="Rose D.J."/>
            <person name="Burland V."/>
            <person name="Kodoyianni V."/>
            <person name="Schwartz D.C."/>
            <person name="Blattner F.R."/>
        </authorList>
    </citation>
    <scope>NUCLEOTIDE SEQUENCE [LARGE SCALE GENOMIC DNA]</scope>
    <source>
        <strain>ATCC 700931 / Ty2</strain>
    </source>
</reference>
<dbReference type="EMBL" id="AL513382">
    <property type="protein sequence ID" value="CAD05173.1"/>
    <property type="molecule type" value="Genomic_DNA"/>
</dbReference>
<dbReference type="EMBL" id="AE014613">
    <property type="protein sequence ID" value="AAO69776.1"/>
    <property type="molecule type" value="Genomic_DNA"/>
</dbReference>
<dbReference type="RefSeq" id="NP_455270.1">
    <property type="nucleotide sequence ID" value="NC_003198.1"/>
</dbReference>
<dbReference type="RefSeq" id="WP_000798844.1">
    <property type="nucleotide sequence ID" value="NZ_WSUR01000015.1"/>
</dbReference>
<dbReference type="SMR" id="P67271"/>
<dbReference type="STRING" id="220341.gene:17584760"/>
<dbReference type="KEGG" id="stt:t2165"/>
<dbReference type="KEGG" id="sty:STY0751"/>
<dbReference type="PATRIC" id="fig|220341.7.peg.759"/>
<dbReference type="eggNOG" id="COG0327">
    <property type="taxonomic scope" value="Bacteria"/>
</dbReference>
<dbReference type="HOGENOM" id="CLU_037423_3_0_6"/>
<dbReference type="OMA" id="RRVGWCT"/>
<dbReference type="OrthoDB" id="9800881at2"/>
<dbReference type="Proteomes" id="UP000000541">
    <property type="component" value="Chromosome"/>
</dbReference>
<dbReference type="Proteomes" id="UP000002670">
    <property type="component" value="Chromosome"/>
</dbReference>
<dbReference type="GO" id="GO:0005737">
    <property type="term" value="C:cytoplasm"/>
    <property type="evidence" value="ECO:0007669"/>
    <property type="project" value="TreeGrafter"/>
</dbReference>
<dbReference type="GO" id="GO:0046872">
    <property type="term" value="F:metal ion binding"/>
    <property type="evidence" value="ECO:0007669"/>
    <property type="project" value="UniProtKB-KW"/>
</dbReference>
<dbReference type="GO" id="GO:0006281">
    <property type="term" value="P:DNA repair"/>
    <property type="evidence" value="ECO:0007669"/>
    <property type="project" value="UniProtKB-KW"/>
</dbReference>
<dbReference type="FunFam" id="3.40.1390.30:FF:000002">
    <property type="entry name" value="Nif3-like dinuclear metal center protein"/>
    <property type="match status" value="1"/>
</dbReference>
<dbReference type="FunFam" id="3.40.1390.30:FF:000003">
    <property type="entry name" value="Nif3-like dinuclear metal center protein"/>
    <property type="match status" value="1"/>
</dbReference>
<dbReference type="Gene3D" id="3.40.1390.30">
    <property type="entry name" value="NIF3 (NGG1p interacting factor 3)-like"/>
    <property type="match status" value="2"/>
</dbReference>
<dbReference type="InterPro" id="IPR002678">
    <property type="entry name" value="DUF34/NIF3"/>
</dbReference>
<dbReference type="InterPro" id="IPR036069">
    <property type="entry name" value="DUF34/NIF3_sf"/>
</dbReference>
<dbReference type="NCBIfam" id="NF008064">
    <property type="entry name" value="PRK10799.1"/>
    <property type="match status" value="1"/>
</dbReference>
<dbReference type="NCBIfam" id="TIGR00486">
    <property type="entry name" value="YbgI_SA1388"/>
    <property type="match status" value="1"/>
</dbReference>
<dbReference type="PANTHER" id="PTHR13799:SF14">
    <property type="entry name" value="GTP CYCLOHYDROLASE 1 TYPE 2 HOMOLOG"/>
    <property type="match status" value="1"/>
</dbReference>
<dbReference type="PANTHER" id="PTHR13799">
    <property type="entry name" value="NGG1 INTERACTING FACTOR 3"/>
    <property type="match status" value="1"/>
</dbReference>
<dbReference type="Pfam" id="PF01784">
    <property type="entry name" value="DUF34_NIF3"/>
    <property type="match status" value="1"/>
</dbReference>
<dbReference type="SUPFAM" id="SSF102705">
    <property type="entry name" value="NIF3 (NGG1p interacting factor 3)-like"/>
    <property type="match status" value="1"/>
</dbReference>
<comment type="function">
    <text evidence="1">Provides significant protection from radiation damage and may be involved in the degradation of radiation-damaged nucleotides.</text>
</comment>
<comment type="subunit">
    <text evidence="1">Toroid-shaped homohexamer. In the hexamer, 3 dimers assemble to form a ring-like structure surrounding a central hole.</text>
</comment>
<comment type="similarity">
    <text evidence="2">Belongs to the GTP cyclohydrolase I type 2/NIF3 family.</text>
</comment>
<accession>P67271</accession>
<accession>Q8XFW7</accession>
<gene>
    <name type="primary">ybgI</name>
    <name type="ordered locus">STY0751</name>
    <name type="ordered locus">t2165</name>
</gene>
<name>GCH1L_SALTI</name>
<evidence type="ECO:0000250" key="1">
    <source>
        <dbReference type="UniProtKB" id="P0AFP6"/>
    </source>
</evidence>
<evidence type="ECO:0000305" key="2"/>